<sequence>MKRNLIKVVKMKSYFAALMLSVSVLPAYAGPLGTADKADLPQSNVSSPMMAQSLRQPDLQPISTDRKTECFRLYTPDRKPGVNCVPDGSTGH</sequence>
<protein>
    <recommendedName>
        <fullName>Uncharacterized protein YjbT</fullName>
    </recommendedName>
</protein>
<reference key="1">
    <citation type="journal article" date="2006" name="Proc. Natl. Acad. Sci. U.S.A.">
        <title>Identification of genes subject to positive selection in uropathogenic strains of Escherichia coli: a comparative genomics approach.</title>
        <authorList>
            <person name="Chen S.L."/>
            <person name="Hung C.-S."/>
            <person name="Xu J."/>
            <person name="Reigstad C.S."/>
            <person name="Magrini V."/>
            <person name="Sabo A."/>
            <person name="Blasiar D."/>
            <person name="Bieri T."/>
            <person name="Meyer R.R."/>
            <person name="Ozersky P."/>
            <person name="Armstrong J.R."/>
            <person name="Fulton R.S."/>
            <person name="Latreille J.P."/>
            <person name="Spieth J."/>
            <person name="Hooton T.M."/>
            <person name="Mardis E.R."/>
            <person name="Hultgren S.J."/>
            <person name="Gordon J.I."/>
        </authorList>
    </citation>
    <scope>NUCLEOTIDE SEQUENCE [LARGE SCALE GENOMIC DNA]</scope>
    <source>
        <strain>UTI89 / UPEC</strain>
    </source>
</reference>
<keyword id="KW-0732">Signal</keyword>
<gene>
    <name type="primary">yjbT</name>
    <name type="ordered locus">UTI89_C4599</name>
</gene>
<comment type="similarity">
    <text evidence="3">Belongs to the YjbT family.</text>
</comment>
<organism>
    <name type="scientific">Escherichia coli (strain UTI89 / UPEC)</name>
    <dbReference type="NCBI Taxonomy" id="364106"/>
    <lineage>
        <taxon>Bacteria</taxon>
        <taxon>Pseudomonadati</taxon>
        <taxon>Pseudomonadota</taxon>
        <taxon>Gammaproteobacteria</taxon>
        <taxon>Enterobacterales</taxon>
        <taxon>Enterobacteriaceae</taxon>
        <taxon>Escherichia</taxon>
    </lineage>
</organism>
<feature type="signal peptide" evidence="1">
    <location>
        <begin position="1"/>
        <end position="29"/>
    </location>
</feature>
<feature type="chain" id="PRO_0000311865" description="Uncharacterized protein YjbT">
    <location>
        <begin position="30"/>
        <end position="92"/>
    </location>
</feature>
<feature type="region of interest" description="Disordered" evidence="2">
    <location>
        <begin position="36"/>
        <end position="62"/>
    </location>
</feature>
<feature type="compositionally biased region" description="Polar residues" evidence="2">
    <location>
        <begin position="41"/>
        <end position="55"/>
    </location>
</feature>
<proteinExistence type="inferred from homology"/>
<evidence type="ECO:0000255" key="1"/>
<evidence type="ECO:0000256" key="2">
    <source>
        <dbReference type="SAM" id="MobiDB-lite"/>
    </source>
</evidence>
<evidence type="ECO:0000305" key="3"/>
<dbReference type="EMBL" id="CP000243">
    <property type="protein sequence ID" value="ABE10007.1"/>
    <property type="molecule type" value="Genomic_DNA"/>
</dbReference>
<dbReference type="RefSeq" id="WP_001331856.1">
    <property type="nucleotide sequence ID" value="NZ_CP064825.1"/>
</dbReference>
<dbReference type="KEGG" id="eci:UTI89_C4599"/>
<dbReference type="HOGENOM" id="CLU_2553093_0_0_6"/>
<dbReference type="Proteomes" id="UP000001952">
    <property type="component" value="Chromosome"/>
</dbReference>
<dbReference type="InterPro" id="IPR031382">
    <property type="entry name" value="YjbT"/>
</dbReference>
<dbReference type="Pfam" id="PF17089">
    <property type="entry name" value="YjbT"/>
    <property type="match status" value="1"/>
</dbReference>
<accession>Q1R3Q7</accession>
<name>YJBT_ECOUT</name>